<accession>Q8DZA4</accession>
<gene>
    <name evidence="1" type="primary">apt</name>
    <name type="ordered locus">SAG1205</name>
</gene>
<feature type="chain" id="PRO_0000149459" description="Adenine phosphoribosyltransferase">
    <location>
        <begin position="1"/>
        <end position="172"/>
    </location>
</feature>
<sequence>MDLNNYIASIENYPQEGITFRDISPLMADGKAYSYAVREIVQYAADKDIDMIVGPEARGFIVGCPVAYALGIGFAPVRKPGKLPREVISADYEKEYGLDTLTMHADAIKPGQRVLIVDDLLATGGTVKATIEMIEKLGGVVAGCAFLVELDGLNGRKAIEGYDTKVLMNFPG</sequence>
<keyword id="KW-0963">Cytoplasm</keyword>
<keyword id="KW-0328">Glycosyltransferase</keyword>
<keyword id="KW-0660">Purine salvage</keyword>
<keyword id="KW-1185">Reference proteome</keyword>
<keyword id="KW-0808">Transferase</keyword>
<name>APT_STRA5</name>
<protein>
    <recommendedName>
        <fullName evidence="1">Adenine phosphoribosyltransferase</fullName>
        <shortName evidence="1">APRT</shortName>
        <ecNumber evidence="1">2.4.2.7</ecNumber>
    </recommendedName>
</protein>
<comment type="function">
    <text evidence="1">Catalyzes a salvage reaction resulting in the formation of AMP, that is energically less costly than de novo synthesis.</text>
</comment>
<comment type="catalytic activity">
    <reaction evidence="1">
        <text>AMP + diphosphate = 5-phospho-alpha-D-ribose 1-diphosphate + adenine</text>
        <dbReference type="Rhea" id="RHEA:16609"/>
        <dbReference type="ChEBI" id="CHEBI:16708"/>
        <dbReference type="ChEBI" id="CHEBI:33019"/>
        <dbReference type="ChEBI" id="CHEBI:58017"/>
        <dbReference type="ChEBI" id="CHEBI:456215"/>
        <dbReference type="EC" id="2.4.2.7"/>
    </reaction>
</comment>
<comment type="pathway">
    <text evidence="1">Purine metabolism; AMP biosynthesis via salvage pathway; AMP from adenine: step 1/1.</text>
</comment>
<comment type="subunit">
    <text evidence="1">Homodimer.</text>
</comment>
<comment type="subcellular location">
    <subcellularLocation>
        <location evidence="1">Cytoplasm</location>
    </subcellularLocation>
</comment>
<comment type="similarity">
    <text evidence="1">Belongs to the purine/pyrimidine phosphoribosyltransferase family.</text>
</comment>
<dbReference type="EC" id="2.4.2.7" evidence="1"/>
<dbReference type="EMBL" id="AE009948">
    <property type="protein sequence ID" value="AAN00087.1"/>
    <property type="molecule type" value="Genomic_DNA"/>
</dbReference>
<dbReference type="RefSeq" id="NP_688214.1">
    <property type="nucleotide sequence ID" value="NC_004116.1"/>
</dbReference>
<dbReference type="RefSeq" id="WP_000365343.1">
    <property type="nucleotide sequence ID" value="NC_004116.1"/>
</dbReference>
<dbReference type="SMR" id="Q8DZA4"/>
<dbReference type="STRING" id="208435.SAG1205"/>
<dbReference type="KEGG" id="sag:SAG1205"/>
<dbReference type="PATRIC" id="fig|208435.3.peg.1212"/>
<dbReference type="HOGENOM" id="CLU_063339_3_0_9"/>
<dbReference type="OrthoDB" id="9803963at2"/>
<dbReference type="UniPathway" id="UPA00588">
    <property type="reaction ID" value="UER00646"/>
</dbReference>
<dbReference type="Proteomes" id="UP000000821">
    <property type="component" value="Chromosome"/>
</dbReference>
<dbReference type="GO" id="GO:0005737">
    <property type="term" value="C:cytoplasm"/>
    <property type="evidence" value="ECO:0007669"/>
    <property type="project" value="UniProtKB-SubCell"/>
</dbReference>
<dbReference type="GO" id="GO:0002055">
    <property type="term" value="F:adenine binding"/>
    <property type="evidence" value="ECO:0007669"/>
    <property type="project" value="TreeGrafter"/>
</dbReference>
<dbReference type="GO" id="GO:0003999">
    <property type="term" value="F:adenine phosphoribosyltransferase activity"/>
    <property type="evidence" value="ECO:0007669"/>
    <property type="project" value="UniProtKB-UniRule"/>
</dbReference>
<dbReference type="GO" id="GO:0016208">
    <property type="term" value="F:AMP binding"/>
    <property type="evidence" value="ECO:0007669"/>
    <property type="project" value="TreeGrafter"/>
</dbReference>
<dbReference type="GO" id="GO:0006168">
    <property type="term" value="P:adenine salvage"/>
    <property type="evidence" value="ECO:0007669"/>
    <property type="project" value="InterPro"/>
</dbReference>
<dbReference type="GO" id="GO:0044209">
    <property type="term" value="P:AMP salvage"/>
    <property type="evidence" value="ECO:0007669"/>
    <property type="project" value="UniProtKB-UniRule"/>
</dbReference>
<dbReference type="GO" id="GO:0006166">
    <property type="term" value="P:purine ribonucleoside salvage"/>
    <property type="evidence" value="ECO:0007669"/>
    <property type="project" value="UniProtKB-KW"/>
</dbReference>
<dbReference type="CDD" id="cd06223">
    <property type="entry name" value="PRTases_typeI"/>
    <property type="match status" value="1"/>
</dbReference>
<dbReference type="FunFam" id="3.40.50.2020:FF:000004">
    <property type="entry name" value="Adenine phosphoribosyltransferase"/>
    <property type="match status" value="1"/>
</dbReference>
<dbReference type="Gene3D" id="3.40.50.2020">
    <property type="match status" value="1"/>
</dbReference>
<dbReference type="HAMAP" id="MF_00004">
    <property type="entry name" value="Aden_phosphoribosyltr"/>
    <property type="match status" value="1"/>
</dbReference>
<dbReference type="InterPro" id="IPR005764">
    <property type="entry name" value="Ade_phspho_trans"/>
</dbReference>
<dbReference type="InterPro" id="IPR000836">
    <property type="entry name" value="PRibTrfase_dom"/>
</dbReference>
<dbReference type="InterPro" id="IPR029057">
    <property type="entry name" value="PRTase-like"/>
</dbReference>
<dbReference type="InterPro" id="IPR050054">
    <property type="entry name" value="UPRTase/APRTase"/>
</dbReference>
<dbReference type="NCBIfam" id="TIGR01090">
    <property type="entry name" value="apt"/>
    <property type="match status" value="1"/>
</dbReference>
<dbReference type="NCBIfam" id="NF002633">
    <property type="entry name" value="PRK02304.1-2"/>
    <property type="match status" value="1"/>
</dbReference>
<dbReference type="NCBIfam" id="NF002634">
    <property type="entry name" value="PRK02304.1-3"/>
    <property type="match status" value="1"/>
</dbReference>
<dbReference type="NCBIfam" id="NF002636">
    <property type="entry name" value="PRK02304.1-5"/>
    <property type="match status" value="1"/>
</dbReference>
<dbReference type="PANTHER" id="PTHR32315">
    <property type="entry name" value="ADENINE PHOSPHORIBOSYLTRANSFERASE"/>
    <property type="match status" value="1"/>
</dbReference>
<dbReference type="PANTHER" id="PTHR32315:SF3">
    <property type="entry name" value="ADENINE PHOSPHORIBOSYLTRANSFERASE"/>
    <property type="match status" value="1"/>
</dbReference>
<dbReference type="Pfam" id="PF00156">
    <property type="entry name" value="Pribosyltran"/>
    <property type="match status" value="1"/>
</dbReference>
<dbReference type="SUPFAM" id="SSF53271">
    <property type="entry name" value="PRTase-like"/>
    <property type="match status" value="1"/>
</dbReference>
<dbReference type="PROSITE" id="PS00103">
    <property type="entry name" value="PUR_PYR_PR_TRANSFER"/>
    <property type="match status" value="1"/>
</dbReference>
<organism>
    <name type="scientific">Streptococcus agalactiae serotype V (strain ATCC BAA-611 / 2603 V/R)</name>
    <dbReference type="NCBI Taxonomy" id="208435"/>
    <lineage>
        <taxon>Bacteria</taxon>
        <taxon>Bacillati</taxon>
        <taxon>Bacillota</taxon>
        <taxon>Bacilli</taxon>
        <taxon>Lactobacillales</taxon>
        <taxon>Streptococcaceae</taxon>
        <taxon>Streptococcus</taxon>
    </lineage>
</organism>
<proteinExistence type="inferred from homology"/>
<reference key="1">
    <citation type="journal article" date="2002" name="Proc. Natl. Acad. Sci. U.S.A.">
        <title>Complete genome sequence and comparative genomic analysis of an emerging human pathogen, serotype V Streptococcus agalactiae.</title>
        <authorList>
            <person name="Tettelin H."/>
            <person name="Masignani V."/>
            <person name="Cieslewicz M.J."/>
            <person name="Eisen J.A."/>
            <person name="Peterson S.N."/>
            <person name="Wessels M.R."/>
            <person name="Paulsen I.T."/>
            <person name="Nelson K.E."/>
            <person name="Margarit I."/>
            <person name="Read T.D."/>
            <person name="Madoff L.C."/>
            <person name="Wolf A.M."/>
            <person name="Beanan M.J."/>
            <person name="Brinkac L.M."/>
            <person name="Daugherty S.C."/>
            <person name="DeBoy R.T."/>
            <person name="Durkin A.S."/>
            <person name="Kolonay J.F."/>
            <person name="Madupu R."/>
            <person name="Lewis M.R."/>
            <person name="Radune D."/>
            <person name="Fedorova N.B."/>
            <person name="Scanlan D."/>
            <person name="Khouri H.M."/>
            <person name="Mulligan S."/>
            <person name="Carty H.A."/>
            <person name="Cline R.T."/>
            <person name="Van Aken S.E."/>
            <person name="Gill J."/>
            <person name="Scarselli M."/>
            <person name="Mora M."/>
            <person name="Iacobini E.T."/>
            <person name="Brettoni C."/>
            <person name="Galli G."/>
            <person name="Mariani M."/>
            <person name="Vegni F."/>
            <person name="Maione D."/>
            <person name="Rinaudo D."/>
            <person name="Rappuoli R."/>
            <person name="Telford J.L."/>
            <person name="Kasper D.L."/>
            <person name="Grandi G."/>
            <person name="Fraser C.M."/>
        </authorList>
    </citation>
    <scope>NUCLEOTIDE SEQUENCE [LARGE SCALE GENOMIC DNA]</scope>
    <source>
        <strain>ATCC BAA-611 / 2603 V/R</strain>
    </source>
</reference>
<evidence type="ECO:0000255" key="1">
    <source>
        <dbReference type="HAMAP-Rule" id="MF_00004"/>
    </source>
</evidence>